<accession>Q812R9</accession>
<feature type="chain" id="PRO_0000172016" description="Putative pre-16S rRNA nuclease">
    <location>
        <begin position="1"/>
        <end position="137"/>
    </location>
</feature>
<keyword id="KW-0963">Cytoplasm</keyword>
<keyword id="KW-0378">Hydrolase</keyword>
<keyword id="KW-0540">Nuclease</keyword>
<keyword id="KW-1185">Reference proteome</keyword>
<keyword id="KW-0690">Ribosome biogenesis</keyword>
<organism>
    <name type="scientific">Bacillus cereus (strain ATCC 14579 / DSM 31 / CCUG 7414 / JCM 2152 / NBRC 15305 / NCIMB 9373 / NCTC 2599 / NRRL B-3711)</name>
    <dbReference type="NCBI Taxonomy" id="226900"/>
    <lineage>
        <taxon>Bacteria</taxon>
        <taxon>Bacillati</taxon>
        <taxon>Bacillota</taxon>
        <taxon>Bacilli</taxon>
        <taxon>Bacillales</taxon>
        <taxon>Bacillaceae</taxon>
        <taxon>Bacillus</taxon>
        <taxon>Bacillus cereus group</taxon>
    </lineage>
</organism>
<sequence>MRILGLDVGTKTVGVAISDEMGWTAQGLETIKINEERGHFGFDRISELVKQYNVDKIVVGLPKNMNGTIGPRGEACQQFAENLRELLQLDVVMWDERLSTMAAERLLISADVSRKKRKQVIDKMAAVVILQGFLDRK</sequence>
<protein>
    <recommendedName>
        <fullName evidence="1">Putative pre-16S rRNA nuclease</fullName>
        <ecNumber evidence="1">3.1.-.-</ecNumber>
    </recommendedName>
</protein>
<evidence type="ECO:0000255" key="1">
    <source>
        <dbReference type="HAMAP-Rule" id="MF_00651"/>
    </source>
</evidence>
<gene>
    <name type="ordered locus">BC_4381</name>
</gene>
<name>YQGF_BACCR</name>
<reference key="1">
    <citation type="journal article" date="2003" name="Nature">
        <title>Genome sequence of Bacillus cereus and comparative analysis with Bacillus anthracis.</title>
        <authorList>
            <person name="Ivanova N."/>
            <person name="Sorokin A."/>
            <person name="Anderson I."/>
            <person name="Galleron N."/>
            <person name="Candelon B."/>
            <person name="Kapatral V."/>
            <person name="Bhattacharyya A."/>
            <person name="Reznik G."/>
            <person name="Mikhailova N."/>
            <person name="Lapidus A."/>
            <person name="Chu L."/>
            <person name="Mazur M."/>
            <person name="Goltsman E."/>
            <person name="Larsen N."/>
            <person name="D'Souza M."/>
            <person name="Walunas T."/>
            <person name="Grechkin Y."/>
            <person name="Pusch G."/>
            <person name="Haselkorn R."/>
            <person name="Fonstein M."/>
            <person name="Ehrlich S.D."/>
            <person name="Overbeek R."/>
            <person name="Kyrpides N.C."/>
        </authorList>
    </citation>
    <scope>NUCLEOTIDE SEQUENCE [LARGE SCALE GENOMIC DNA]</scope>
    <source>
        <strain>ATCC 14579 / DSM 31 / CCUG 7414 / JCM 2152 / NBRC 15305 / NCIMB 9373 / NCTC 2599 / NRRL B-3711</strain>
    </source>
</reference>
<comment type="function">
    <text evidence="1">Could be a nuclease involved in processing of the 5'-end of pre-16S rRNA.</text>
</comment>
<comment type="subcellular location">
    <subcellularLocation>
        <location evidence="1">Cytoplasm</location>
    </subcellularLocation>
</comment>
<comment type="similarity">
    <text evidence="1">Belongs to the YqgF nuclease family.</text>
</comment>
<dbReference type="EC" id="3.1.-.-" evidence="1"/>
<dbReference type="EMBL" id="AE016877">
    <property type="protein sequence ID" value="AAP11294.1"/>
    <property type="molecule type" value="Genomic_DNA"/>
</dbReference>
<dbReference type="RefSeq" id="NP_834093.1">
    <property type="nucleotide sequence ID" value="NC_004722.1"/>
</dbReference>
<dbReference type="SMR" id="Q812R9"/>
<dbReference type="STRING" id="226900.BC_4381"/>
<dbReference type="KEGG" id="bce:BC4381"/>
<dbReference type="PATRIC" id="fig|226900.8.peg.4531"/>
<dbReference type="HOGENOM" id="CLU_098240_2_0_9"/>
<dbReference type="OrthoDB" id="9796140at2"/>
<dbReference type="Proteomes" id="UP000001417">
    <property type="component" value="Chromosome"/>
</dbReference>
<dbReference type="GO" id="GO:0005737">
    <property type="term" value="C:cytoplasm"/>
    <property type="evidence" value="ECO:0007669"/>
    <property type="project" value="UniProtKB-SubCell"/>
</dbReference>
<dbReference type="GO" id="GO:0004518">
    <property type="term" value="F:nuclease activity"/>
    <property type="evidence" value="ECO:0007669"/>
    <property type="project" value="UniProtKB-KW"/>
</dbReference>
<dbReference type="GO" id="GO:0000967">
    <property type="term" value="P:rRNA 5'-end processing"/>
    <property type="evidence" value="ECO:0000318"/>
    <property type="project" value="GO_Central"/>
</dbReference>
<dbReference type="CDD" id="cd16964">
    <property type="entry name" value="YqgF"/>
    <property type="match status" value="1"/>
</dbReference>
<dbReference type="FunFam" id="3.30.420.140:FF:000003">
    <property type="entry name" value="Putative pre-16S rRNA nuclease"/>
    <property type="match status" value="1"/>
</dbReference>
<dbReference type="Gene3D" id="3.30.420.140">
    <property type="entry name" value="YqgF/RNase H-like domain"/>
    <property type="match status" value="1"/>
</dbReference>
<dbReference type="HAMAP" id="MF_00651">
    <property type="entry name" value="Nuclease_YqgF"/>
    <property type="match status" value="1"/>
</dbReference>
<dbReference type="InterPro" id="IPR012337">
    <property type="entry name" value="RNaseH-like_sf"/>
</dbReference>
<dbReference type="InterPro" id="IPR005227">
    <property type="entry name" value="YqgF"/>
</dbReference>
<dbReference type="InterPro" id="IPR006641">
    <property type="entry name" value="YqgF/RNaseH-like_dom"/>
</dbReference>
<dbReference type="InterPro" id="IPR037027">
    <property type="entry name" value="YqgF/RNaseH-like_dom_sf"/>
</dbReference>
<dbReference type="NCBIfam" id="TIGR00250">
    <property type="entry name" value="RNAse_H_YqgF"/>
    <property type="match status" value="1"/>
</dbReference>
<dbReference type="PANTHER" id="PTHR33317">
    <property type="entry name" value="POLYNUCLEOTIDYL TRANSFERASE, RIBONUCLEASE H-LIKE SUPERFAMILY PROTEIN"/>
    <property type="match status" value="1"/>
</dbReference>
<dbReference type="PANTHER" id="PTHR33317:SF4">
    <property type="entry name" value="POLYNUCLEOTIDYL TRANSFERASE, RIBONUCLEASE H-LIKE SUPERFAMILY PROTEIN"/>
    <property type="match status" value="1"/>
</dbReference>
<dbReference type="Pfam" id="PF03652">
    <property type="entry name" value="RuvX"/>
    <property type="match status" value="1"/>
</dbReference>
<dbReference type="SMART" id="SM00732">
    <property type="entry name" value="YqgFc"/>
    <property type="match status" value="1"/>
</dbReference>
<dbReference type="SUPFAM" id="SSF53098">
    <property type="entry name" value="Ribonuclease H-like"/>
    <property type="match status" value="1"/>
</dbReference>
<proteinExistence type="inferred from homology"/>